<protein>
    <recommendedName>
        <fullName evidence="1">2-succinyl-5-enolpyruvyl-6-hydroxy-3-cyclohexene-1-carboxylate synthase</fullName>
        <shortName evidence="1">SEPHCHC synthase</shortName>
        <ecNumber evidence="1">2.2.1.9</ecNumber>
    </recommendedName>
    <alternativeName>
        <fullName evidence="1">Menaquinone biosynthesis protein MenD</fullName>
    </alternativeName>
</protein>
<reference key="1">
    <citation type="journal article" date="2008" name="Genomics">
        <title>Evolution in the laboratory: the genome of Halobacterium salinarum strain R1 compared to that of strain NRC-1.</title>
        <authorList>
            <person name="Pfeiffer F."/>
            <person name="Schuster S.C."/>
            <person name="Broicher A."/>
            <person name="Falb M."/>
            <person name="Palm P."/>
            <person name="Rodewald K."/>
            <person name="Ruepp A."/>
            <person name="Soppa J."/>
            <person name="Tittor J."/>
            <person name="Oesterhelt D."/>
        </authorList>
    </citation>
    <scope>NUCLEOTIDE SEQUENCE [LARGE SCALE GENOMIC DNA]</scope>
    <source>
        <strain>ATCC 29341 / DSM 671 / R1</strain>
    </source>
</reference>
<dbReference type="EC" id="2.2.1.9" evidence="1"/>
<dbReference type="EMBL" id="AM774415">
    <property type="protein sequence ID" value="CAP13756.1"/>
    <property type="molecule type" value="Genomic_DNA"/>
</dbReference>
<dbReference type="RefSeq" id="WP_010902775.1">
    <property type="nucleotide sequence ID" value="NC_010364.1"/>
</dbReference>
<dbReference type="SMR" id="B0R4U1"/>
<dbReference type="EnsemblBacteria" id="CAP13756">
    <property type="protein sequence ID" value="CAP13756"/>
    <property type="gene ID" value="OE_2563R"/>
</dbReference>
<dbReference type="GeneID" id="68693871"/>
<dbReference type="KEGG" id="hsl:OE_2563R"/>
<dbReference type="HOGENOM" id="CLU_006051_3_0_2"/>
<dbReference type="PhylomeDB" id="B0R4U1"/>
<dbReference type="UniPathway" id="UPA00079"/>
<dbReference type="UniPathway" id="UPA01057">
    <property type="reaction ID" value="UER00164"/>
</dbReference>
<dbReference type="Proteomes" id="UP000001321">
    <property type="component" value="Chromosome"/>
</dbReference>
<dbReference type="GO" id="GO:0070204">
    <property type="term" value="F:2-succinyl-5-enolpyruvyl-6-hydroxy-3-cyclohexene-1-carboxylic-acid synthase activity"/>
    <property type="evidence" value="ECO:0007669"/>
    <property type="project" value="UniProtKB-UniRule"/>
</dbReference>
<dbReference type="GO" id="GO:0000287">
    <property type="term" value="F:magnesium ion binding"/>
    <property type="evidence" value="ECO:0007669"/>
    <property type="project" value="UniProtKB-UniRule"/>
</dbReference>
<dbReference type="GO" id="GO:0030145">
    <property type="term" value="F:manganese ion binding"/>
    <property type="evidence" value="ECO:0007669"/>
    <property type="project" value="UniProtKB-UniRule"/>
</dbReference>
<dbReference type="GO" id="GO:0030976">
    <property type="term" value="F:thiamine pyrophosphate binding"/>
    <property type="evidence" value="ECO:0007669"/>
    <property type="project" value="UniProtKB-UniRule"/>
</dbReference>
<dbReference type="GO" id="GO:0009234">
    <property type="term" value="P:menaquinone biosynthetic process"/>
    <property type="evidence" value="ECO:0007669"/>
    <property type="project" value="UniProtKB-UniRule"/>
</dbReference>
<dbReference type="GO" id="GO:0006082">
    <property type="term" value="P:organic acid metabolic process"/>
    <property type="evidence" value="ECO:0007669"/>
    <property type="project" value="UniProtKB-ARBA"/>
</dbReference>
<dbReference type="GO" id="GO:0044272">
    <property type="term" value="P:sulfur compound biosynthetic process"/>
    <property type="evidence" value="ECO:0007669"/>
    <property type="project" value="UniProtKB-ARBA"/>
</dbReference>
<dbReference type="CDD" id="cd07037">
    <property type="entry name" value="TPP_PYR_MenD"/>
    <property type="match status" value="1"/>
</dbReference>
<dbReference type="CDD" id="cd02009">
    <property type="entry name" value="TPP_SHCHC_synthase"/>
    <property type="match status" value="1"/>
</dbReference>
<dbReference type="Gene3D" id="3.40.50.970">
    <property type="match status" value="2"/>
</dbReference>
<dbReference type="Gene3D" id="3.40.50.1220">
    <property type="entry name" value="TPP-binding domain"/>
    <property type="match status" value="1"/>
</dbReference>
<dbReference type="HAMAP" id="MF_01659">
    <property type="entry name" value="MenD"/>
    <property type="match status" value="1"/>
</dbReference>
<dbReference type="InterPro" id="IPR029035">
    <property type="entry name" value="DHS-like_NAD/FAD-binding_dom"/>
</dbReference>
<dbReference type="InterPro" id="IPR004433">
    <property type="entry name" value="MenaQ_synth_MenD"/>
</dbReference>
<dbReference type="InterPro" id="IPR029061">
    <property type="entry name" value="THDP-binding"/>
</dbReference>
<dbReference type="InterPro" id="IPR012001">
    <property type="entry name" value="Thiamin_PyroP_enz_TPP-bd_dom"/>
</dbReference>
<dbReference type="InterPro" id="IPR011766">
    <property type="entry name" value="TPP_enzyme_TPP-bd"/>
</dbReference>
<dbReference type="NCBIfam" id="TIGR00173">
    <property type="entry name" value="menD"/>
    <property type="match status" value="1"/>
</dbReference>
<dbReference type="PANTHER" id="PTHR42916">
    <property type="entry name" value="2-SUCCINYL-5-ENOLPYRUVYL-6-HYDROXY-3-CYCLOHEXENE-1-CARBOXYLATE SYNTHASE"/>
    <property type="match status" value="1"/>
</dbReference>
<dbReference type="PANTHER" id="PTHR42916:SF1">
    <property type="entry name" value="PROTEIN PHYLLO, CHLOROPLASTIC"/>
    <property type="match status" value="1"/>
</dbReference>
<dbReference type="Pfam" id="PF02775">
    <property type="entry name" value="TPP_enzyme_C"/>
    <property type="match status" value="1"/>
</dbReference>
<dbReference type="Pfam" id="PF02776">
    <property type="entry name" value="TPP_enzyme_N"/>
    <property type="match status" value="1"/>
</dbReference>
<dbReference type="PIRSF" id="PIRSF004983">
    <property type="entry name" value="MenD"/>
    <property type="match status" value="1"/>
</dbReference>
<dbReference type="SUPFAM" id="SSF52467">
    <property type="entry name" value="DHS-like NAD/FAD-binding domain"/>
    <property type="match status" value="1"/>
</dbReference>
<dbReference type="SUPFAM" id="SSF52518">
    <property type="entry name" value="Thiamin diphosphate-binding fold (THDP-binding)"/>
    <property type="match status" value="2"/>
</dbReference>
<feature type="chain" id="PRO_0000341898" description="2-succinyl-5-enolpyruvyl-6-hydroxy-3-cyclohexene-1-carboxylate synthase">
    <location>
        <begin position="1"/>
        <end position="584"/>
    </location>
</feature>
<feature type="region of interest" description="Disordered" evidence="2">
    <location>
        <begin position="563"/>
        <end position="584"/>
    </location>
</feature>
<feature type="compositionally biased region" description="Basic and acidic residues" evidence="2">
    <location>
        <begin position="566"/>
        <end position="577"/>
    </location>
</feature>
<evidence type="ECO:0000255" key="1">
    <source>
        <dbReference type="HAMAP-Rule" id="MF_01659"/>
    </source>
</evidence>
<evidence type="ECO:0000256" key="2">
    <source>
        <dbReference type="SAM" id="MobiDB-lite"/>
    </source>
</evidence>
<accession>B0R4U1</accession>
<keyword id="KW-0460">Magnesium</keyword>
<keyword id="KW-0464">Manganese</keyword>
<keyword id="KW-0474">Menaquinone biosynthesis</keyword>
<keyword id="KW-0479">Metal-binding</keyword>
<keyword id="KW-0786">Thiamine pyrophosphate</keyword>
<keyword id="KW-0808">Transferase</keyword>
<organism>
    <name type="scientific">Halobacterium salinarum (strain ATCC 29341 / DSM 671 / R1)</name>
    <dbReference type="NCBI Taxonomy" id="478009"/>
    <lineage>
        <taxon>Archaea</taxon>
        <taxon>Methanobacteriati</taxon>
        <taxon>Methanobacteriota</taxon>
        <taxon>Stenosarchaea group</taxon>
        <taxon>Halobacteria</taxon>
        <taxon>Halobacteriales</taxon>
        <taxon>Halobacteriaceae</taxon>
        <taxon>Halobacterium</taxon>
        <taxon>Halobacterium salinarum NRC-34001</taxon>
    </lineage>
</organism>
<comment type="function">
    <text evidence="1">Catalyzes the thiamine diphosphate-dependent decarboxylation of 2-oxoglutarate and the subsequent addition of the resulting succinic semialdehyde-thiamine pyrophosphate anion to isochorismate to yield 2-succinyl-5-enolpyruvyl-6-hydroxy-3-cyclohexene-1-carboxylate (SEPHCHC).</text>
</comment>
<comment type="catalytic activity">
    <reaction evidence="1">
        <text>isochorismate + 2-oxoglutarate + H(+) = 5-enolpyruvoyl-6-hydroxy-2-succinyl-cyclohex-3-ene-1-carboxylate + CO2</text>
        <dbReference type="Rhea" id="RHEA:25593"/>
        <dbReference type="ChEBI" id="CHEBI:15378"/>
        <dbReference type="ChEBI" id="CHEBI:16526"/>
        <dbReference type="ChEBI" id="CHEBI:16810"/>
        <dbReference type="ChEBI" id="CHEBI:29780"/>
        <dbReference type="ChEBI" id="CHEBI:58818"/>
        <dbReference type="EC" id="2.2.1.9"/>
    </reaction>
</comment>
<comment type="cofactor">
    <cofactor evidence="1">
        <name>Mg(2+)</name>
        <dbReference type="ChEBI" id="CHEBI:18420"/>
    </cofactor>
    <cofactor evidence="1">
        <name>Mn(2+)</name>
        <dbReference type="ChEBI" id="CHEBI:29035"/>
    </cofactor>
</comment>
<comment type="cofactor">
    <cofactor evidence="1">
        <name>thiamine diphosphate</name>
        <dbReference type="ChEBI" id="CHEBI:58937"/>
    </cofactor>
    <text evidence="1">Binds 1 thiamine pyrophosphate per subunit.</text>
</comment>
<comment type="pathway">
    <text evidence="1">Quinol/quinone metabolism; 1,4-dihydroxy-2-naphthoate biosynthesis; 1,4-dihydroxy-2-naphthoate from chorismate: step 2/7.</text>
</comment>
<comment type="pathway">
    <text evidence="1">Quinol/quinone metabolism; menaquinone biosynthesis.</text>
</comment>
<comment type="subunit">
    <text evidence="1">Homodimer.</text>
</comment>
<comment type="similarity">
    <text evidence="1">Belongs to the TPP enzyme family. MenD subfamily.</text>
</comment>
<proteinExistence type="inferred from homology"/>
<gene>
    <name evidence="1" type="primary">menD</name>
    <name type="ordered locus">OE_2563R</name>
</gene>
<name>MEND_HALS3</name>
<sequence>MTAPNRNTLWARAIADELAAAGVHAVCVCPGSRSTPLTVAVDAHDDLTVYSHLDERSAAFFALGRGKRTGAPTAVLTTSGTATANLHPAVMEAAQARIPLVVLTADRPPELRGSGANQTVDQEQLYGSAVRYYEDLPEPEVTARKLRSLRTSVCRAVGHTTGPKPGPVHLNVPFRKPLEPVSVPGDVPPSFDDDHPLAAAGRGGDTPFVSVHDGTTEPAGETAAALAAAATTAARPLVVAGPADGGAGITPDAAAALADATGAPIFADPLSGLRFGPHVGDAPVVGGYDGFLAADVPHPEFVLRFGASPTSKPLRKWLAASDARQVVVDPAGGWREAEFTATDVVAADPAATARAIAARADGTRSAWTDAVLDLEARYWAAVDDFQPAATLEGEIAATVAAGAPDPATVFVSNSMPIRDFDRFAAPRGADLAVLGNRGASGIDGVVSSALGAGSATADPVVGLVGDLAYFHDSNGLLALERCGVDATIVLVNNDGGSIFHMLPIEQFDPPFTGQFKTPHGLDFAPTADTYALSFARTDTVGEFRAAYRAALGDAGTHVIEVSTDAEASHRERERLADRVTGLSV</sequence>